<organism>
    <name type="scientific">Shigella boydii serotype 4 (strain Sb227)</name>
    <dbReference type="NCBI Taxonomy" id="300268"/>
    <lineage>
        <taxon>Bacteria</taxon>
        <taxon>Pseudomonadati</taxon>
        <taxon>Pseudomonadota</taxon>
        <taxon>Gammaproteobacteria</taxon>
        <taxon>Enterobacterales</taxon>
        <taxon>Enterobacteriaceae</taxon>
        <taxon>Shigella</taxon>
    </lineage>
</organism>
<protein>
    <recommendedName>
        <fullName evidence="1">Ribosomal RNA large subunit methyltransferase I</fullName>
        <ecNumber evidence="1">2.1.1.191</ecNumber>
    </recommendedName>
    <alternativeName>
        <fullName evidence="1">23S rRNA m5C1962 methyltransferase</fullName>
    </alternativeName>
    <alternativeName>
        <fullName evidence="1">rRNA (cytosine-C(5)-)-methyltransferase RlmI</fullName>
    </alternativeName>
</protein>
<reference key="1">
    <citation type="journal article" date="2005" name="Nucleic Acids Res.">
        <title>Genome dynamics and diversity of Shigella species, the etiologic agents of bacillary dysentery.</title>
        <authorList>
            <person name="Yang F."/>
            <person name="Yang J."/>
            <person name="Zhang X."/>
            <person name="Chen L."/>
            <person name="Jiang Y."/>
            <person name="Yan Y."/>
            <person name="Tang X."/>
            <person name="Wang J."/>
            <person name="Xiong Z."/>
            <person name="Dong J."/>
            <person name="Xue Y."/>
            <person name="Zhu Y."/>
            <person name="Xu X."/>
            <person name="Sun L."/>
            <person name="Chen S."/>
            <person name="Nie H."/>
            <person name="Peng J."/>
            <person name="Xu J."/>
            <person name="Wang Y."/>
            <person name="Yuan Z."/>
            <person name="Wen Y."/>
            <person name="Yao Z."/>
            <person name="Shen Y."/>
            <person name="Qiang B."/>
            <person name="Hou Y."/>
            <person name="Yu J."/>
            <person name="Jin Q."/>
        </authorList>
    </citation>
    <scope>NUCLEOTIDE SEQUENCE [LARGE SCALE GENOMIC DNA]</scope>
    <source>
        <strain>Sb227</strain>
    </source>
</reference>
<dbReference type="EC" id="2.1.1.191" evidence="1"/>
<dbReference type="EMBL" id="CP000036">
    <property type="protein sequence ID" value="ABB66828.1"/>
    <property type="status" value="ALT_INIT"/>
    <property type="molecule type" value="Genomic_DNA"/>
</dbReference>
<dbReference type="RefSeq" id="WP_000116300.1">
    <property type="nucleotide sequence ID" value="NC_007613.1"/>
</dbReference>
<dbReference type="SMR" id="Q31YN0"/>
<dbReference type="KEGG" id="sbo:SBO_2264"/>
<dbReference type="HOGENOM" id="CLU_014042_0_0_6"/>
<dbReference type="Proteomes" id="UP000007067">
    <property type="component" value="Chromosome"/>
</dbReference>
<dbReference type="GO" id="GO:0005737">
    <property type="term" value="C:cytoplasm"/>
    <property type="evidence" value="ECO:0007669"/>
    <property type="project" value="UniProtKB-SubCell"/>
</dbReference>
<dbReference type="GO" id="GO:0003723">
    <property type="term" value="F:RNA binding"/>
    <property type="evidence" value="ECO:0007669"/>
    <property type="project" value="UniProtKB-KW"/>
</dbReference>
<dbReference type="GO" id="GO:0016434">
    <property type="term" value="F:rRNA (cytosine) methyltransferase activity"/>
    <property type="evidence" value="ECO:0007669"/>
    <property type="project" value="UniProtKB-UniRule"/>
</dbReference>
<dbReference type="CDD" id="cd02440">
    <property type="entry name" value="AdoMet_MTases"/>
    <property type="match status" value="1"/>
</dbReference>
<dbReference type="CDD" id="cd21153">
    <property type="entry name" value="PUA_RlmI"/>
    <property type="match status" value="1"/>
</dbReference>
<dbReference type="CDD" id="cd11572">
    <property type="entry name" value="RlmI_M_like"/>
    <property type="match status" value="1"/>
</dbReference>
<dbReference type="FunFam" id="2.30.130.10:FF:000005">
    <property type="entry name" value="Ribosomal RNA large subunit methyltransferase I"/>
    <property type="match status" value="1"/>
</dbReference>
<dbReference type="FunFam" id="3.30.750.80:FF:000002">
    <property type="entry name" value="Ribosomal RNA large subunit methyltransferase I"/>
    <property type="match status" value="1"/>
</dbReference>
<dbReference type="FunFam" id="3.40.50.150:FF:000044">
    <property type="entry name" value="Ribosomal RNA large subunit methyltransferase I"/>
    <property type="match status" value="1"/>
</dbReference>
<dbReference type="Gene3D" id="2.30.130.10">
    <property type="entry name" value="PUA domain"/>
    <property type="match status" value="1"/>
</dbReference>
<dbReference type="Gene3D" id="3.30.750.80">
    <property type="entry name" value="RNA methyltransferase domain (HRMD) like"/>
    <property type="match status" value="1"/>
</dbReference>
<dbReference type="Gene3D" id="3.40.50.150">
    <property type="entry name" value="Vaccinia Virus protein VP39"/>
    <property type="match status" value="1"/>
</dbReference>
<dbReference type="HAMAP" id="MF_01857">
    <property type="entry name" value="23SrRNA_methyltr_I"/>
    <property type="match status" value="1"/>
</dbReference>
<dbReference type="InterPro" id="IPR002478">
    <property type="entry name" value="PUA"/>
</dbReference>
<dbReference type="InterPro" id="IPR015947">
    <property type="entry name" value="PUA-like_sf"/>
</dbReference>
<dbReference type="InterPro" id="IPR036974">
    <property type="entry name" value="PUA_sf"/>
</dbReference>
<dbReference type="InterPro" id="IPR023542">
    <property type="entry name" value="RLMI"/>
</dbReference>
<dbReference type="InterPro" id="IPR041532">
    <property type="entry name" value="RlmI-like_PUA"/>
</dbReference>
<dbReference type="InterPro" id="IPR019614">
    <property type="entry name" value="SAM-dep_methyl-trfase"/>
</dbReference>
<dbReference type="InterPro" id="IPR029063">
    <property type="entry name" value="SAM-dependent_MTases_sf"/>
</dbReference>
<dbReference type="NCBIfam" id="NF011707">
    <property type="entry name" value="PRK15128.1"/>
    <property type="match status" value="1"/>
</dbReference>
<dbReference type="PANTHER" id="PTHR42873">
    <property type="entry name" value="RIBOSOMAL RNA LARGE SUBUNIT METHYLTRANSFERASE"/>
    <property type="match status" value="1"/>
</dbReference>
<dbReference type="PANTHER" id="PTHR42873:SF1">
    <property type="entry name" value="S-ADENOSYLMETHIONINE-DEPENDENT METHYLTRANSFERASE DOMAIN-CONTAINING PROTEIN"/>
    <property type="match status" value="1"/>
</dbReference>
<dbReference type="Pfam" id="PF10672">
    <property type="entry name" value="Methyltrans_SAM"/>
    <property type="match status" value="1"/>
</dbReference>
<dbReference type="Pfam" id="PF17785">
    <property type="entry name" value="PUA_3"/>
    <property type="match status" value="1"/>
</dbReference>
<dbReference type="SMART" id="SM00359">
    <property type="entry name" value="PUA"/>
    <property type="match status" value="1"/>
</dbReference>
<dbReference type="SUPFAM" id="SSF88697">
    <property type="entry name" value="PUA domain-like"/>
    <property type="match status" value="1"/>
</dbReference>
<dbReference type="SUPFAM" id="SSF53335">
    <property type="entry name" value="S-adenosyl-L-methionine-dependent methyltransferases"/>
    <property type="match status" value="1"/>
</dbReference>
<dbReference type="PROSITE" id="PS50890">
    <property type="entry name" value="PUA"/>
    <property type="match status" value="1"/>
</dbReference>
<proteinExistence type="inferred from homology"/>
<feature type="chain" id="PRO_0000366267" description="Ribosomal RNA large subunit methyltransferase I">
    <location>
        <begin position="1"/>
        <end position="396"/>
    </location>
</feature>
<feature type="domain" description="PUA" evidence="1">
    <location>
        <begin position="2"/>
        <end position="81"/>
    </location>
</feature>
<gene>
    <name evidence="1" type="primary">rlmI</name>
    <name type="ordered locus">SBO_2264</name>
</gene>
<sequence>MSVRLVLAKGREKSLLRRHPWVFSGAVARMEGKASLGETIDIVDHQGKWLARGAYSPASQIRARVWTFDPSESIDIAFFSRRLQQAQKWRDWLAQKDGLDSYRLIAGESDGLPGITIDRFGNFLVLQLLSAGAEYQRAALVSALQTLYPECAIYDRSDVAVRKKEGMELTLGLVTGELPPALLPIEEHGMKLLVDIQHGHKTGYYLDQRDSRLATRRYVENKRVLNCFSYTGGFAVSALMGGCSQVVSVDTSQEALDIARQNVELNKLDLSKAEFVRDDVFKLLRTYRDRGEKFDVIVMDPPKFVENKSQLMGACRGYKDINMLAIQLLNEGGILLTFSCSGLMTSDLFQKIIADAAIDAGRDVQFIEQFRQAADHPVIATYPEGLYLKGFACRVM</sequence>
<name>RLMI_SHIBS</name>
<keyword id="KW-0963">Cytoplasm</keyword>
<keyword id="KW-0489">Methyltransferase</keyword>
<keyword id="KW-0694">RNA-binding</keyword>
<keyword id="KW-0698">rRNA processing</keyword>
<keyword id="KW-0949">S-adenosyl-L-methionine</keyword>
<keyword id="KW-0808">Transferase</keyword>
<comment type="function">
    <text evidence="1">Specifically methylates the cytosine at position 1962 (m5C1962) of 23S rRNA.</text>
</comment>
<comment type="catalytic activity">
    <reaction evidence="1">
        <text>cytidine(1962) in 23S rRNA + S-adenosyl-L-methionine = 5-methylcytidine(1962) in 23S rRNA + S-adenosyl-L-homocysteine + H(+)</text>
        <dbReference type="Rhea" id="RHEA:42912"/>
        <dbReference type="Rhea" id="RHEA-COMP:10382"/>
        <dbReference type="Rhea" id="RHEA-COMP:10386"/>
        <dbReference type="ChEBI" id="CHEBI:15378"/>
        <dbReference type="ChEBI" id="CHEBI:57856"/>
        <dbReference type="ChEBI" id="CHEBI:59789"/>
        <dbReference type="ChEBI" id="CHEBI:74483"/>
        <dbReference type="ChEBI" id="CHEBI:82748"/>
        <dbReference type="EC" id="2.1.1.191"/>
    </reaction>
</comment>
<comment type="subcellular location">
    <subcellularLocation>
        <location evidence="1">Cytoplasm</location>
    </subcellularLocation>
</comment>
<comment type="similarity">
    <text evidence="1">Belongs to the methyltransferase superfamily. RlmI family.</text>
</comment>
<comment type="sequence caution" evidence="2">
    <conflict type="erroneous initiation">
        <sequence resource="EMBL-CDS" id="ABB66828"/>
    </conflict>
</comment>
<accession>Q31YN0</accession>
<evidence type="ECO:0000255" key="1">
    <source>
        <dbReference type="HAMAP-Rule" id="MF_01857"/>
    </source>
</evidence>
<evidence type="ECO:0000305" key="2"/>